<keyword id="KW-0028">Amino-acid biosynthesis</keyword>
<keyword id="KW-0067">ATP-binding</keyword>
<keyword id="KW-0963">Cytoplasm</keyword>
<keyword id="KW-0418">Kinase</keyword>
<keyword id="KW-0547">Nucleotide-binding</keyword>
<keyword id="KW-0791">Threonine biosynthesis</keyword>
<keyword id="KW-0808">Transferase</keyword>
<proteinExistence type="inferred from homology"/>
<reference key="1">
    <citation type="submission" date="2007-11" db="EMBL/GenBank/DDBJ databases">
        <authorList>
            <consortium name="The Salmonella enterica serovar Paratyphi B Genome Sequencing Project"/>
            <person name="McClelland M."/>
            <person name="Sanderson E.K."/>
            <person name="Porwollik S."/>
            <person name="Spieth J."/>
            <person name="Clifton W.S."/>
            <person name="Fulton R."/>
            <person name="Cordes M."/>
            <person name="Wollam A."/>
            <person name="Shah N."/>
            <person name="Pepin K."/>
            <person name="Bhonagiri V."/>
            <person name="Nash W."/>
            <person name="Johnson M."/>
            <person name="Thiruvilangam P."/>
            <person name="Wilson R."/>
        </authorList>
    </citation>
    <scope>NUCLEOTIDE SEQUENCE [LARGE SCALE GENOMIC DNA]</scope>
    <source>
        <strain>ATCC BAA-1250 / SPB7</strain>
    </source>
</reference>
<comment type="function">
    <text evidence="1">Catalyzes the ATP-dependent phosphorylation of L-homoserine to L-homoserine phosphate.</text>
</comment>
<comment type="catalytic activity">
    <reaction evidence="1">
        <text>L-homoserine + ATP = O-phospho-L-homoserine + ADP + H(+)</text>
        <dbReference type="Rhea" id="RHEA:13985"/>
        <dbReference type="ChEBI" id="CHEBI:15378"/>
        <dbReference type="ChEBI" id="CHEBI:30616"/>
        <dbReference type="ChEBI" id="CHEBI:57476"/>
        <dbReference type="ChEBI" id="CHEBI:57590"/>
        <dbReference type="ChEBI" id="CHEBI:456216"/>
        <dbReference type="EC" id="2.7.1.39"/>
    </reaction>
</comment>
<comment type="pathway">
    <text evidence="1">Amino-acid biosynthesis; L-threonine biosynthesis; L-threonine from L-aspartate: step 4/5.</text>
</comment>
<comment type="subcellular location">
    <subcellularLocation>
        <location evidence="1">Cytoplasm</location>
    </subcellularLocation>
</comment>
<comment type="similarity">
    <text evidence="1">Belongs to the GHMP kinase family. Homoserine kinase subfamily.</text>
</comment>
<evidence type="ECO:0000255" key="1">
    <source>
        <dbReference type="HAMAP-Rule" id="MF_00384"/>
    </source>
</evidence>
<dbReference type="EC" id="2.7.1.39" evidence="1"/>
<dbReference type="EMBL" id="CP000886">
    <property type="protein sequence ID" value="ABX65447.1"/>
    <property type="molecule type" value="Genomic_DNA"/>
</dbReference>
<dbReference type="RefSeq" id="WP_000241679.1">
    <property type="nucleotide sequence ID" value="NC_010102.1"/>
</dbReference>
<dbReference type="SMR" id="A9MXH1"/>
<dbReference type="KEGG" id="spq:SPAB_00003"/>
<dbReference type="PATRIC" id="fig|1016998.12.peg.2"/>
<dbReference type="HOGENOM" id="CLU_041243_1_1_6"/>
<dbReference type="BioCyc" id="SENT1016998:SPAB_RS00020-MONOMER"/>
<dbReference type="UniPathway" id="UPA00050">
    <property type="reaction ID" value="UER00064"/>
</dbReference>
<dbReference type="Proteomes" id="UP000008556">
    <property type="component" value="Chromosome"/>
</dbReference>
<dbReference type="GO" id="GO:0005737">
    <property type="term" value="C:cytoplasm"/>
    <property type="evidence" value="ECO:0007669"/>
    <property type="project" value="UniProtKB-SubCell"/>
</dbReference>
<dbReference type="GO" id="GO:0005524">
    <property type="term" value="F:ATP binding"/>
    <property type="evidence" value="ECO:0007669"/>
    <property type="project" value="UniProtKB-UniRule"/>
</dbReference>
<dbReference type="GO" id="GO:0004413">
    <property type="term" value="F:homoserine kinase activity"/>
    <property type="evidence" value="ECO:0007669"/>
    <property type="project" value="UniProtKB-UniRule"/>
</dbReference>
<dbReference type="GO" id="GO:0009088">
    <property type="term" value="P:threonine biosynthetic process"/>
    <property type="evidence" value="ECO:0007669"/>
    <property type="project" value="UniProtKB-UniRule"/>
</dbReference>
<dbReference type="FunFam" id="3.30.230.10:FF:000020">
    <property type="entry name" value="Homoserine kinase"/>
    <property type="match status" value="1"/>
</dbReference>
<dbReference type="FunFam" id="3.30.70.890:FF:000002">
    <property type="entry name" value="Homoserine kinase"/>
    <property type="match status" value="1"/>
</dbReference>
<dbReference type="Gene3D" id="3.30.230.10">
    <property type="match status" value="1"/>
</dbReference>
<dbReference type="Gene3D" id="3.30.70.890">
    <property type="entry name" value="GHMP kinase, C-terminal domain"/>
    <property type="match status" value="1"/>
</dbReference>
<dbReference type="HAMAP" id="MF_00384">
    <property type="entry name" value="Homoser_kinase"/>
    <property type="match status" value="1"/>
</dbReference>
<dbReference type="InterPro" id="IPR013750">
    <property type="entry name" value="GHMP_kinase_C_dom"/>
</dbReference>
<dbReference type="InterPro" id="IPR036554">
    <property type="entry name" value="GHMP_kinase_C_sf"/>
</dbReference>
<dbReference type="InterPro" id="IPR006204">
    <property type="entry name" value="GHMP_kinase_N_dom"/>
</dbReference>
<dbReference type="InterPro" id="IPR006203">
    <property type="entry name" value="GHMP_knse_ATP-bd_CS"/>
</dbReference>
<dbReference type="InterPro" id="IPR000870">
    <property type="entry name" value="Homoserine_kinase"/>
</dbReference>
<dbReference type="InterPro" id="IPR020568">
    <property type="entry name" value="Ribosomal_Su5_D2-typ_SF"/>
</dbReference>
<dbReference type="InterPro" id="IPR014721">
    <property type="entry name" value="Ribsml_uS5_D2-typ_fold_subgr"/>
</dbReference>
<dbReference type="NCBIfam" id="NF002288">
    <property type="entry name" value="PRK01212.1-4"/>
    <property type="match status" value="1"/>
</dbReference>
<dbReference type="NCBIfam" id="TIGR00191">
    <property type="entry name" value="thrB"/>
    <property type="match status" value="1"/>
</dbReference>
<dbReference type="PANTHER" id="PTHR20861:SF1">
    <property type="entry name" value="HOMOSERINE KINASE"/>
    <property type="match status" value="1"/>
</dbReference>
<dbReference type="PANTHER" id="PTHR20861">
    <property type="entry name" value="HOMOSERINE/4-DIPHOSPHOCYTIDYL-2-C-METHYL-D-ERYTHRITOL KINASE"/>
    <property type="match status" value="1"/>
</dbReference>
<dbReference type="Pfam" id="PF08544">
    <property type="entry name" value="GHMP_kinases_C"/>
    <property type="match status" value="1"/>
</dbReference>
<dbReference type="Pfam" id="PF00288">
    <property type="entry name" value="GHMP_kinases_N"/>
    <property type="match status" value="1"/>
</dbReference>
<dbReference type="PIRSF" id="PIRSF000676">
    <property type="entry name" value="Homoser_kin"/>
    <property type="match status" value="1"/>
</dbReference>
<dbReference type="PRINTS" id="PR00958">
    <property type="entry name" value="HOMSERKINASE"/>
</dbReference>
<dbReference type="SUPFAM" id="SSF55060">
    <property type="entry name" value="GHMP Kinase, C-terminal domain"/>
    <property type="match status" value="1"/>
</dbReference>
<dbReference type="SUPFAM" id="SSF54211">
    <property type="entry name" value="Ribosomal protein S5 domain 2-like"/>
    <property type="match status" value="1"/>
</dbReference>
<dbReference type="PROSITE" id="PS00627">
    <property type="entry name" value="GHMP_KINASES_ATP"/>
    <property type="match status" value="1"/>
</dbReference>
<protein>
    <recommendedName>
        <fullName evidence="1">Homoserine kinase</fullName>
        <shortName evidence="1">HK</shortName>
        <shortName evidence="1">HSK</shortName>
        <ecNumber evidence="1">2.7.1.39</ecNumber>
    </recommendedName>
</protein>
<feature type="chain" id="PRO_1000080128" description="Homoserine kinase">
    <location>
        <begin position="1"/>
        <end position="309"/>
    </location>
</feature>
<feature type="binding site" evidence="1">
    <location>
        <begin position="91"/>
        <end position="101"/>
    </location>
    <ligand>
        <name>ATP</name>
        <dbReference type="ChEBI" id="CHEBI:30616"/>
    </ligand>
</feature>
<name>KHSE_SALPB</name>
<gene>
    <name evidence="1" type="primary">thrB</name>
    <name type="ordered locus">SPAB_00003</name>
</gene>
<accession>A9MXH1</accession>
<organism>
    <name type="scientific">Salmonella paratyphi B (strain ATCC BAA-1250 / SPB7)</name>
    <dbReference type="NCBI Taxonomy" id="1016998"/>
    <lineage>
        <taxon>Bacteria</taxon>
        <taxon>Pseudomonadati</taxon>
        <taxon>Pseudomonadota</taxon>
        <taxon>Gammaproteobacteria</taxon>
        <taxon>Enterobacterales</taxon>
        <taxon>Enterobacteriaceae</taxon>
        <taxon>Salmonella</taxon>
    </lineage>
</organism>
<sequence>MVKVYAPASSANMSVGFDVLGAAVTPVDGTLLGDVVSVEAADHFRLHNLGRFADKLPPEPRENIVYQCWERFCQALGKTIPVAMTLEKNMPIGSGLGSSACSVAAALVAMNEHCGKPLNDTRLLALMGELEGRISGSIHYDNVAPCFLGGMQLMIEENGIISQQVPGFDEWLWVLAYPGIKVSTAEARAILPAQYRRQDCIAHGRHLAGFIHACYSRQPQLAAALMKDVIAEPYRARLLPGFSQARQAVSEIGALASGISGSGPTLFALCDKPETAQRVADWLSKHYLQNQEGFVHICRLDTAGARVVG</sequence>